<name>TIG_SERP5</name>
<sequence>MQVSVETTQGLGRRLSITVPADTIKQAIKKELINAAKSVRIDGFRKGHVPMNIVEQRYGASVRQDVLGDAMQRSFVDAIIKEKINPAGAPNYVPGEYKEGEDFTFAVEFEVYPEVELKGLDGIEVEKPVVEVNDADVDTMLDTLRKQQATWKETDRAAQAEDRVTVDFSGSIDGEEFEGGKASDFVLAMGQGRMIPGFEEGLVGHKAGEEFTIDVNFPEDYHAENLKGKAAKFAIVLKKVEERELPELTEEFIKRFGVADGSTEGLRAEVRKNMERELKGAVRNRIKTQAIDGLVSANEIDVPAALIDGEVDVLRRQAAQRFGGNEKQALELPRELFEEQAKRRVVVGLLLGEVISTNDLKADEDRVKTLIEEMASAYEDPSEVVEFYSKNKELMNNMRNVALEEQAVEALLAKAKVTEKATTFSELMNQTQQA</sequence>
<feature type="chain" id="PRO_1000059330" description="Trigger factor">
    <location>
        <begin position="1"/>
        <end position="434"/>
    </location>
</feature>
<feature type="domain" description="PPIase FKBP-type" evidence="1">
    <location>
        <begin position="161"/>
        <end position="246"/>
    </location>
</feature>
<proteinExistence type="inferred from homology"/>
<dbReference type="EC" id="5.2.1.8" evidence="1"/>
<dbReference type="EMBL" id="CP000826">
    <property type="protein sequence ID" value="ABV40198.1"/>
    <property type="molecule type" value="Genomic_DNA"/>
</dbReference>
<dbReference type="SMR" id="A8GAQ8"/>
<dbReference type="STRING" id="399741.Spro_1094"/>
<dbReference type="KEGG" id="spe:Spro_1094"/>
<dbReference type="eggNOG" id="COG0544">
    <property type="taxonomic scope" value="Bacteria"/>
</dbReference>
<dbReference type="HOGENOM" id="CLU_033058_2_0_6"/>
<dbReference type="OrthoDB" id="9767721at2"/>
<dbReference type="GO" id="GO:0005737">
    <property type="term" value="C:cytoplasm"/>
    <property type="evidence" value="ECO:0007669"/>
    <property type="project" value="UniProtKB-SubCell"/>
</dbReference>
<dbReference type="GO" id="GO:0003755">
    <property type="term" value="F:peptidyl-prolyl cis-trans isomerase activity"/>
    <property type="evidence" value="ECO:0007669"/>
    <property type="project" value="UniProtKB-UniRule"/>
</dbReference>
<dbReference type="GO" id="GO:0044183">
    <property type="term" value="F:protein folding chaperone"/>
    <property type="evidence" value="ECO:0007669"/>
    <property type="project" value="TreeGrafter"/>
</dbReference>
<dbReference type="GO" id="GO:0043022">
    <property type="term" value="F:ribosome binding"/>
    <property type="evidence" value="ECO:0007669"/>
    <property type="project" value="TreeGrafter"/>
</dbReference>
<dbReference type="GO" id="GO:0051083">
    <property type="term" value="P:'de novo' cotranslational protein folding"/>
    <property type="evidence" value="ECO:0007669"/>
    <property type="project" value="TreeGrafter"/>
</dbReference>
<dbReference type="GO" id="GO:0051301">
    <property type="term" value="P:cell division"/>
    <property type="evidence" value="ECO:0007669"/>
    <property type="project" value="UniProtKB-KW"/>
</dbReference>
<dbReference type="GO" id="GO:0061077">
    <property type="term" value="P:chaperone-mediated protein folding"/>
    <property type="evidence" value="ECO:0007669"/>
    <property type="project" value="TreeGrafter"/>
</dbReference>
<dbReference type="GO" id="GO:0015031">
    <property type="term" value="P:protein transport"/>
    <property type="evidence" value="ECO:0007669"/>
    <property type="project" value="UniProtKB-UniRule"/>
</dbReference>
<dbReference type="GO" id="GO:0043335">
    <property type="term" value="P:protein unfolding"/>
    <property type="evidence" value="ECO:0007669"/>
    <property type="project" value="TreeGrafter"/>
</dbReference>
<dbReference type="FunFam" id="1.10.3120.10:FF:000001">
    <property type="entry name" value="Trigger factor"/>
    <property type="match status" value="1"/>
</dbReference>
<dbReference type="FunFam" id="3.10.50.40:FF:000001">
    <property type="entry name" value="Trigger factor"/>
    <property type="match status" value="1"/>
</dbReference>
<dbReference type="FunFam" id="3.30.70.1050:FF:000001">
    <property type="entry name" value="Trigger factor"/>
    <property type="match status" value="1"/>
</dbReference>
<dbReference type="Gene3D" id="3.10.50.40">
    <property type="match status" value="1"/>
</dbReference>
<dbReference type="Gene3D" id="3.30.70.1050">
    <property type="entry name" value="Trigger factor ribosome-binding domain"/>
    <property type="match status" value="1"/>
</dbReference>
<dbReference type="Gene3D" id="1.10.3120.10">
    <property type="entry name" value="Trigger factor, C-terminal domain"/>
    <property type="match status" value="1"/>
</dbReference>
<dbReference type="HAMAP" id="MF_00303">
    <property type="entry name" value="Trigger_factor_Tig"/>
    <property type="match status" value="1"/>
</dbReference>
<dbReference type="InterPro" id="IPR046357">
    <property type="entry name" value="PPIase_dom_sf"/>
</dbReference>
<dbReference type="InterPro" id="IPR001179">
    <property type="entry name" value="PPIase_FKBP_dom"/>
</dbReference>
<dbReference type="InterPro" id="IPR005215">
    <property type="entry name" value="Trig_fac"/>
</dbReference>
<dbReference type="InterPro" id="IPR008880">
    <property type="entry name" value="Trigger_fac_C"/>
</dbReference>
<dbReference type="InterPro" id="IPR037041">
    <property type="entry name" value="Trigger_fac_C_sf"/>
</dbReference>
<dbReference type="InterPro" id="IPR008881">
    <property type="entry name" value="Trigger_fac_ribosome-bd_bac"/>
</dbReference>
<dbReference type="InterPro" id="IPR036611">
    <property type="entry name" value="Trigger_fac_ribosome-bd_sf"/>
</dbReference>
<dbReference type="InterPro" id="IPR027304">
    <property type="entry name" value="Trigger_fact/SurA_dom_sf"/>
</dbReference>
<dbReference type="NCBIfam" id="TIGR00115">
    <property type="entry name" value="tig"/>
    <property type="match status" value="1"/>
</dbReference>
<dbReference type="PANTHER" id="PTHR30560">
    <property type="entry name" value="TRIGGER FACTOR CHAPERONE AND PEPTIDYL-PROLYL CIS/TRANS ISOMERASE"/>
    <property type="match status" value="1"/>
</dbReference>
<dbReference type="PANTHER" id="PTHR30560:SF3">
    <property type="entry name" value="TRIGGER FACTOR-LIKE PROTEIN TIG, CHLOROPLASTIC"/>
    <property type="match status" value="1"/>
</dbReference>
<dbReference type="Pfam" id="PF00254">
    <property type="entry name" value="FKBP_C"/>
    <property type="match status" value="1"/>
</dbReference>
<dbReference type="Pfam" id="PF05698">
    <property type="entry name" value="Trigger_C"/>
    <property type="match status" value="1"/>
</dbReference>
<dbReference type="Pfam" id="PF05697">
    <property type="entry name" value="Trigger_N"/>
    <property type="match status" value="1"/>
</dbReference>
<dbReference type="PIRSF" id="PIRSF003095">
    <property type="entry name" value="Trigger_factor"/>
    <property type="match status" value="1"/>
</dbReference>
<dbReference type="SUPFAM" id="SSF54534">
    <property type="entry name" value="FKBP-like"/>
    <property type="match status" value="1"/>
</dbReference>
<dbReference type="SUPFAM" id="SSF109998">
    <property type="entry name" value="Triger factor/SurA peptide-binding domain-like"/>
    <property type="match status" value="1"/>
</dbReference>
<dbReference type="SUPFAM" id="SSF102735">
    <property type="entry name" value="Trigger factor ribosome-binding domain"/>
    <property type="match status" value="1"/>
</dbReference>
<dbReference type="PROSITE" id="PS50059">
    <property type="entry name" value="FKBP_PPIASE"/>
    <property type="match status" value="1"/>
</dbReference>
<keyword id="KW-0131">Cell cycle</keyword>
<keyword id="KW-0132">Cell division</keyword>
<keyword id="KW-0143">Chaperone</keyword>
<keyword id="KW-0963">Cytoplasm</keyword>
<keyword id="KW-0413">Isomerase</keyword>
<keyword id="KW-0697">Rotamase</keyword>
<gene>
    <name evidence="1" type="primary">tig</name>
    <name type="ordered locus">Spro_1094</name>
</gene>
<accession>A8GAQ8</accession>
<comment type="function">
    <text evidence="1">Involved in protein export. Acts as a chaperone by maintaining the newly synthesized protein in an open conformation. Functions as a peptidyl-prolyl cis-trans isomerase.</text>
</comment>
<comment type="catalytic activity">
    <reaction evidence="1">
        <text>[protein]-peptidylproline (omega=180) = [protein]-peptidylproline (omega=0)</text>
        <dbReference type="Rhea" id="RHEA:16237"/>
        <dbReference type="Rhea" id="RHEA-COMP:10747"/>
        <dbReference type="Rhea" id="RHEA-COMP:10748"/>
        <dbReference type="ChEBI" id="CHEBI:83833"/>
        <dbReference type="ChEBI" id="CHEBI:83834"/>
        <dbReference type="EC" id="5.2.1.8"/>
    </reaction>
</comment>
<comment type="subcellular location">
    <subcellularLocation>
        <location>Cytoplasm</location>
    </subcellularLocation>
    <text evidence="1">About half TF is bound to the ribosome near the polypeptide exit tunnel while the other half is free in the cytoplasm.</text>
</comment>
<comment type="domain">
    <text evidence="1">Consists of 3 domains; the N-terminus binds the ribosome, the middle domain has PPIase activity, while the C-terminus has intrinsic chaperone activity on its own.</text>
</comment>
<comment type="similarity">
    <text evidence="1">Belongs to the FKBP-type PPIase family. Tig subfamily.</text>
</comment>
<organism>
    <name type="scientific">Serratia proteamaculans (strain 568)</name>
    <dbReference type="NCBI Taxonomy" id="399741"/>
    <lineage>
        <taxon>Bacteria</taxon>
        <taxon>Pseudomonadati</taxon>
        <taxon>Pseudomonadota</taxon>
        <taxon>Gammaproteobacteria</taxon>
        <taxon>Enterobacterales</taxon>
        <taxon>Yersiniaceae</taxon>
        <taxon>Serratia</taxon>
    </lineage>
</organism>
<protein>
    <recommendedName>
        <fullName evidence="1">Trigger factor</fullName>
        <shortName evidence="1">TF</shortName>
        <ecNumber evidence="1">5.2.1.8</ecNumber>
    </recommendedName>
    <alternativeName>
        <fullName evidence="1">PPIase</fullName>
    </alternativeName>
</protein>
<evidence type="ECO:0000255" key="1">
    <source>
        <dbReference type="HAMAP-Rule" id="MF_00303"/>
    </source>
</evidence>
<reference key="1">
    <citation type="submission" date="2007-09" db="EMBL/GenBank/DDBJ databases">
        <title>Complete sequence of chromosome of Serratia proteamaculans 568.</title>
        <authorList>
            <consortium name="US DOE Joint Genome Institute"/>
            <person name="Copeland A."/>
            <person name="Lucas S."/>
            <person name="Lapidus A."/>
            <person name="Barry K."/>
            <person name="Glavina del Rio T."/>
            <person name="Dalin E."/>
            <person name="Tice H."/>
            <person name="Pitluck S."/>
            <person name="Chain P."/>
            <person name="Malfatti S."/>
            <person name="Shin M."/>
            <person name="Vergez L."/>
            <person name="Schmutz J."/>
            <person name="Larimer F."/>
            <person name="Land M."/>
            <person name="Hauser L."/>
            <person name="Kyrpides N."/>
            <person name="Kim E."/>
            <person name="Taghavi S."/>
            <person name="Newman L."/>
            <person name="Vangronsveld J."/>
            <person name="van der Lelie D."/>
            <person name="Richardson P."/>
        </authorList>
    </citation>
    <scope>NUCLEOTIDE SEQUENCE [LARGE SCALE GENOMIC DNA]</scope>
    <source>
        <strain>568</strain>
    </source>
</reference>